<protein>
    <recommendedName>
        <fullName evidence="1">ATP-dependent protease subunit HslV</fullName>
        <ecNumber evidence="1">3.4.25.2</ecNumber>
    </recommendedName>
    <alternativeName>
        <fullName evidence="1">Heat shock protein HslV</fullName>
    </alternativeName>
</protein>
<dbReference type="EC" id="3.4.25.2" evidence="1"/>
<dbReference type="EMBL" id="CP000266">
    <property type="protein sequence ID" value="ABF06008.1"/>
    <property type="molecule type" value="Genomic_DNA"/>
</dbReference>
<dbReference type="RefSeq" id="WP_000208242.1">
    <property type="nucleotide sequence ID" value="NC_008258.1"/>
</dbReference>
<dbReference type="SMR" id="Q0SY57"/>
<dbReference type="MEROPS" id="T01.006"/>
<dbReference type="GeneID" id="93777966"/>
<dbReference type="KEGG" id="sfv:SFV_4003"/>
<dbReference type="HOGENOM" id="CLU_093872_1_0_6"/>
<dbReference type="Proteomes" id="UP000000659">
    <property type="component" value="Chromosome"/>
</dbReference>
<dbReference type="GO" id="GO:0009376">
    <property type="term" value="C:HslUV protease complex"/>
    <property type="evidence" value="ECO:0007669"/>
    <property type="project" value="UniProtKB-UniRule"/>
</dbReference>
<dbReference type="GO" id="GO:0005839">
    <property type="term" value="C:proteasome core complex"/>
    <property type="evidence" value="ECO:0007669"/>
    <property type="project" value="InterPro"/>
</dbReference>
<dbReference type="GO" id="GO:0046872">
    <property type="term" value="F:metal ion binding"/>
    <property type="evidence" value="ECO:0007669"/>
    <property type="project" value="UniProtKB-KW"/>
</dbReference>
<dbReference type="GO" id="GO:0004298">
    <property type="term" value="F:threonine-type endopeptidase activity"/>
    <property type="evidence" value="ECO:0007669"/>
    <property type="project" value="UniProtKB-KW"/>
</dbReference>
<dbReference type="GO" id="GO:0051603">
    <property type="term" value="P:proteolysis involved in protein catabolic process"/>
    <property type="evidence" value="ECO:0007669"/>
    <property type="project" value="InterPro"/>
</dbReference>
<dbReference type="CDD" id="cd01913">
    <property type="entry name" value="protease_HslV"/>
    <property type="match status" value="1"/>
</dbReference>
<dbReference type="FunFam" id="3.60.20.10:FF:000002">
    <property type="entry name" value="ATP-dependent protease subunit HslV"/>
    <property type="match status" value="1"/>
</dbReference>
<dbReference type="Gene3D" id="3.60.20.10">
    <property type="entry name" value="Glutamine Phosphoribosylpyrophosphate, subunit 1, domain 1"/>
    <property type="match status" value="1"/>
</dbReference>
<dbReference type="HAMAP" id="MF_00248">
    <property type="entry name" value="HslV"/>
    <property type="match status" value="1"/>
</dbReference>
<dbReference type="InterPro" id="IPR022281">
    <property type="entry name" value="ATP-dep_Prtase_HsIV_su"/>
</dbReference>
<dbReference type="InterPro" id="IPR029055">
    <property type="entry name" value="Ntn_hydrolases_N"/>
</dbReference>
<dbReference type="InterPro" id="IPR001353">
    <property type="entry name" value="Proteasome_sua/b"/>
</dbReference>
<dbReference type="InterPro" id="IPR023333">
    <property type="entry name" value="Proteasome_suB-type"/>
</dbReference>
<dbReference type="NCBIfam" id="TIGR03692">
    <property type="entry name" value="ATP_dep_HslV"/>
    <property type="match status" value="1"/>
</dbReference>
<dbReference type="NCBIfam" id="NF003964">
    <property type="entry name" value="PRK05456.1"/>
    <property type="match status" value="1"/>
</dbReference>
<dbReference type="PANTHER" id="PTHR32194:SF0">
    <property type="entry name" value="ATP-DEPENDENT PROTEASE SUBUNIT HSLV"/>
    <property type="match status" value="1"/>
</dbReference>
<dbReference type="PANTHER" id="PTHR32194">
    <property type="entry name" value="METALLOPROTEASE TLDD"/>
    <property type="match status" value="1"/>
</dbReference>
<dbReference type="Pfam" id="PF00227">
    <property type="entry name" value="Proteasome"/>
    <property type="match status" value="1"/>
</dbReference>
<dbReference type="PIRSF" id="PIRSF039093">
    <property type="entry name" value="HslV"/>
    <property type="match status" value="1"/>
</dbReference>
<dbReference type="SUPFAM" id="SSF56235">
    <property type="entry name" value="N-terminal nucleophile aminohydrolases (Ntn hydrolases)"/>
    <property type="match status" value="1"/>
</dbReference>
<dbReference type="PROSITE" id="PS51476">
    <property type="entry name" value="PROTEASOME_BETA_2"/>
    <property type="match status" value="1"/>
</dbReference>
<proteinExistence type="inferred from homology"/>
<keyword id="KW-0021">Allosteric enzyme</keyword>
<keyword id="KW-0963">Cytoplasm</keyword>
<keyword id="KW-0378">Hydrolase</keyword>
<keyword id="KW-0479">Metal-binding</keyword>
<keyword id="KW-0645">Protease</keyword>
<keyword id="KW-0915">Sodium</keyword>
<keyword id="KW-0346">Stress response</keyword>
<keyword id="KW-0888">Threonine protease</keyword>
<organism>
    <name type="scientific">Shigella flexneri serotype 5b (strain 8401)</name>
    <dbReference type="NCBI Taxonomy" id="373384"/>
    <lineage>
        <taxon>Bacteria</taxon>
        <taxon>Pseudomonadati</taxon>
        <taxon>Pseudomonadota</taxon>
        <taxon>Gammaproteobacteria</taxon>
        <taxon>Enterobacterales</taxon>
        <taxon>Enterobacteriaceae</taxon>
        <taxon>Shigella</taxon>
    </lineage>
</organism>
<reference key="1">
    <citation type="journal article" date="2006" name="BMC Genomics">
        <title>Complete genome sequence of Shigella flexneri 5b and comparison with Shigella flexneri 2a.</title>
        <authorList>
            <person name="Nie H."/>
            <person name="Yang F."/>
            <person name="Zhang X."/>
            <person name="Yang J."/>
            <person name="Chen L."/>
            <person name="Wang J."/>
            <person name="Xiong Z."/>
            <person name="Peng J."/>
            <person name="Sun L."/>
            <person name="Dong J."/>
            <person name="Xue Y."/>
            <person name="Xu X."/>
            <person name="Chen S."/>
            <person name="Yao Z."/>
            <person name="Shen Y."/>
            <person name="Jin Q."/>
        </authorList>
    </citation>
    <scope>NUCLEOTIDE SEQUENCE [LARGE SCALE GENOMIC DNA]</scope>
    <source>
        <strain>8401</strain>
    </source>
</reference>
<feature type="chain" id="PRO_1000012676" description="ATP-dependent protease subunit HslV">
    <location>
        <begin position="1"/>
        <end position="176"/>
    </location>
</feature>
<feature type="active site" evidence="1">
    <location>
        <position position="2"/>
    </location>
</feature>
<feature type="binding site" evidence="1">
    <location>
        <position position="157"/>
    </location>
    <ligand>
        <name>Na(+)</name>
        <dbReference type="ChEBI" id="CHEBI:29101"/>
    </ligand>
</feature>
<feature type="binding site" evidence="1">
    <location>
        <position position="160"/>
    </location>
    <ligand>
        <name>Na(+)</name>
        <dbReference type="ChEBI" id="CHEBI:29101"/>
    </ligand>
</feature>
<feature type="binding site" evidence="1">
    <location>
        <position position="163"/>
    </location>
    <ligand>
        <name>Na(+)</name>
        <dbReference type="ChEBI" id="CHEBI:29101"/>
    </ligand>
</feature>
<evidence type="ECO:0000255" key="1">
    <source>
        <dbReference type="HAMAP-Rule" id="MF_00248"/>
    </source>
</evidence>
<comment type="function">
    <text evidence="1">Protease subunit of a proteasome-like degradation complex believed to be a general protein degrading machinery.</text>
</comment>
<comment type="catalytic activity">
    <reaction evidence="1">
        <text>ATP-dependent cleavage of peptide bonds with broad specificity.</text>
        <dbReference type="EC" id="3.4.25.2"/>
    </reaction>
</comment>
<comment type="activity regulation">
    <text evidence="1">Allosterically activated by HslU binding.</text>
</comment>
<comment type="subunit">
    <text evidence="1">A double ring-shaped homohexamer of HslV is capped on each side by a ring-shaped HslU homohexamer. The assembly of the HslU/HslV complex is dependent on binding of ATP.</text>
</comment>
<comment type="subcellular location">
    <subcellularLocation>
        <location evidence="1">Cytoplasm</location>
    </subcellularLocation>
</comment>
<comment type="induction">
    <text evidence="1">By heat shock.</text>
</comment>
<comment type="similarity">
    <text evidence="1">Belongs to the peptidase T1B family. HslV subfamily.</text>
</comment>
<gene>
    <name evidence="1" type="primary">hslV</name>
    <name type="ordered locus">SFV_4003</name>
</gene>
<name>HSLV_SHIF8</name>
<accession>Q0SY57</accession>
<sequence>MTTIVSVRRNGHVVIAGDGQATLGNTVMKGNVKKVRRLYNDKVIAGFAGGTADAFTLFELFERKLEMHQGHLVKAAVELAKDWRTDRMLRKLEALLAVADETASLIITGNGDVVQPENDLIAIGSGGPYAQAAARALLENTELSAREIAEKALDIAGDICIYTNHFHTIEELSYKA</sequence>